<comment type="function">
    <text evidence="1">One of the primary rRNA binding proteins, it binds directly to 16S rRNA where it nucleates assembly of the body of the 30S subunit.</text>
</comment>
<comment type="function">
    <text evidence="1">With S5 and S12 plays an important role in translational accuracy.</text>
</comment>
<comment type="subunit">
    <text evidence="1">Part of the 30S ribosomal subunit. Contacts protein S5. The interaction surface between S4 and S5 is involved in control of translational fidelity.</text>
</comment>
<comment type="similarity">
    <text evidence="1">Belongs to the universal ribosomal protein uS4 family.</text>
</comment>
<evidence type="ECO:0000255" key="1">
    <source>
        <dbReference type="HAMAP-Rule" id="MF_01306"/>
    </source>
</evidence>
<evidence type="ECO:0000305" key="2"/>
<name>RS4_NEIM0</name>
<protein>
    <recommendedName>
        <fullName evidence="1">Small ribosomal subunit protein uS4</fullName>
    </recommendedName>
    <alternativeName>
        <fullName evidence="2">30S ribosomal protein S4</fullName>
    </alternativeName>
</protein>
<reference key="1">
    <citation type="journal article" date="2008" name="Genomics">
        <title>Characterization of ST-4821 complex, a unique Neisseria meningitidis clone.</title>
        <authorList>
            <person name="Peng J."/>
            <person name="Yang L."/>
            <person name="Yang F."/>
            <person name="Yang J."/>
            <person name="Yan Y."/>
            <person name="Nie H."/>
            <person name="Zhang X."/>
            <person name="Xiong Z."/>
            <person name="Jiang Y."/>
            <person name="Cheng F."/>
            <person name="Xu X."/>
            <person name="Chen S."/>
            <person name="Sun L."/>
            <person name="Li W."/>
            <person name="Shen Y."/>
            <person name="Shao Z."/>
            <person name="Liang X."/>
            <person name="Xu J."/>
            <person name="Jin Q."/>
        </authorList>
    </citation>
    <scope>NUCLEOTIDE SEQUENCE [LARGE SCALE GENOMIC DNA]</scope>
    <source>
        <strain>053442</strain>
    </source>
</reference>
<accession>A9M3U1</accession>
<dbReference type="EMBL" id="CP000381">
    <property type="protein sequence ID" value="ABX74108.1"/>
    <property type="molecule type" value="Genomic_DNA"/>
</dbReference>
<dbReference type="RefSeq" id="WP_002215455.1">
    <property type="nucleotide sequence ID" value="NC_010120.1"/>
</dbReference>
<dbReference type="SMR" id="A9M3U1"/>
<dbReference type="GeneID" id="93387242"/>
<dbReference type="KEGG" id="nmn:NMCC_1985"/>
<dbReference type="HOGENOM" id="CLU_092403_0_2_4"/>
<dbReference type="Proteomes" id="UP000001177">
    <property type="component" value="Chromosome"/>
</dbReference>
<dbReference type="GO" id="GO:0015935">
    <property type="term" value="C:small ribosomal subunit"/>
    <property type="evidence" value="ECO:0007669"/>
    <property type="project" value="InterPro"/>
</dbReference>
<dbReference type="GO" id="GO:0019843">
    <property type="term" value="F:rRNA binding"/>
    <property type="evidence" value="ECO:0007669"/>
    <property type="project" value="UniProtKB-UniRule"/>
</dbReference>
<dbReference type="GO" id="GO:0003735">
    <property type="term" value="F:structural constituent of ribosome"/>
    <property type="evidence" value="ECO:0007669"/>
    <property type="project" value="InterPro"/>
</dbReference>
<dbReference type="GO" id="GO:0042274">
    <property type="term" value="P:ribosomal small subunit biogenesis"/>
    <property type="evidence" value="ECO:0007669"/>
    <property type="project" value="TreeGrafter"/>
</dbReference>
<dbReference type="GO" id="GO:0006412">
    <property type="term" value="P:translation"/>
    <property type="evidence" value="ECO:0007669"/>
    <property type="project" value="UniProtKB-UniRule"/>
</dbReference>
<dbReference type="CDD" id="cd00165">
    <property type="entry name" value="S4"/>
    <property type="match status" value="1"/>
</dbReference>
<dbReference type="FunFam" id="1.10.1050.10:FF:000001">
    <property type="entry name" value="30S ribosomal protein S4"/>
    <property type="match status" value="1"/>
</dbReference>
<dbReference type="FunFam" id="3.10.290.10:FF:000001">
    <property type="entry name" value="30S ribosomal protein S4"/>
    <property type="match status" value="1"/>
</dbReference>
<dbReference type="Gene3D" id="1.10.1050.10">
    <property type="entry name" value="Ribosomal Protein S4 Delta 41, Chain A, domain 1"/>
    <property type="match status" value="1"/>
</dbReference>
<dbReference type="Gene3D" id="3.10.290.10">
    <property type="entry name" value="RNA-binding S4 domain"/>
    <property type="match status" value="1"/>
</dbReference>
<dbReference type="HAMAP" id="MF_01306_B">
    <property type="entry name" value="Ribosomal_uS4_B"/>
    <property type="match status" value="1"/>
</dbReference>
<dbReference type="InterPro" id="IPR022801">
    <property type="entry name" value="Ribosomal_uS4"/>
</dbReference>
<dbReference type="InterPro" id="IPR005709">
    <property type="entry name" value="Ribosomal_uS4_bac-type"/>
</dbReference>
<dbReference type="InterPro" id="IPR018079">
    <property type="entry name" value="Ribosomal_uS4_CS"/>
</dbReference>
<dbReference type="InterPro" id="IPR001912">
    <property type="entry name" value="Ribosomal_uS4_N"/>
</dbReference>
<dbReference type="InterPro" id="IPR002942">
    <property type="entry name" value="S4_RNA-bd"/>
</dbReference>
<dbReference type="InterPro" id="IPR036986">
    <property type="entry name" value="S4_RNA-bd_sf"/>
</dbReference>
<dbReference type="NCBIfam" id="NF003717">
    <property type="entry name" value="PRK05327.1"/>
    <property type="match status" value="1"/>
</dbReference>
<dbReference type="NCBIfam" id="TIGR01017">
    <property type="entry name" value="rpsD_bact"/>
    <property type="match status" value="1"/>
</dbReference>
<dbReference type="PANTHER" id="PTHR11831">
    <property type="entry name" value="30S 40S RIBOSOMAL PROTEIN"/>
    <property type="match status" value="1"/>
</dbReference>
<dbReference type="PANTHER" id="PTHR11831:SF4">
    <property type="entry name" value="SMALL RIBOSOMAL SUBUNIT PROTEIN US4M"/>
    <property type="match status" value="1"/>
</dbReference>
<dbReference type="Pfam" id="PF00163">
    <property type="entry name" value="Ribosomal_S4"/>
    <property type="match status" value="1"/>
</dbReference>
<dbReference type="Pfam" id="PF01479">
    <property type="entry name" value="S4"/>
    <property type="match status" value="1"/>
</dbReference>
<dbReference type="SMART" id="SM01390">
    <property type="entry name" value="Ribosomal_S4"/>
    <property type="match status" value="1"/>
</dbReference>
<dbReference type="SMART" id="SM00363">
    <property type="entry name" value="S4"/>
    <property type="match status" value="1"/>
</dbReference>
<dbReference type="SUPFAM" id="SSF55174">
    <property type="entry name" value="Alpha-L RNA-binding motif"/>
    <property type="match status" value="1"/>
</dbReference>
<dbReference type="PROSITE" id="PS00632">
    <property type="entry name" value="RIBOSOMAL_S4"/>
    <property type="match status" value="1"/>
</dbReference>
<dbReference type="PROSITE" id="PS50889">
    <property type="entry name" value="S4"/>
    <property type="match status" value="1"/>
</dbReference>
<organism>
    <name type="scientific">Neisseria meningitidis serogroup C (strain 053442)</name>
    <dbReference type="NCBI Taxonomy" id="374833"/>
    <lineage>
        <taxon>Bacteria</taxon>
        <taxon>Pseudomonadati</taxon>
        <taxon>Pseudomonadota</taxon>
        <taxon>Betaproteobacteria</taxon>
        <taxon>Neisseriales</taxon>
        <taxon>Neisseriaceae</taxon>
        <taxon>Neisseria</taxon>
    </lineage>
</organism>
<proteinExistence type="inferred from homology"/>
<feature type="chain" id="PRO_1000085981" description="Small ribosomal subunit protein uS4">
    <location>
        <begin position="1"/>
        <end position="206"/>
    </location>
</feature>
<feature type="domain" description="S4 RNA-binding" evidence="1">
    <location>
        <begin position="96"/>
        <end position="157"/>
    </location>
</feature>
<gene>
    <name evidence="1" type="primary">rpsD</name>
    <name type="ordered locus">NMCC_1985</name>
</gene>
<keyword id="KW-0687">Ribonucleoprotein</keyword>
<keyword id="KW-0689">Ribosomal protein</keyword>
<keyword id="KW-0694">RNA-binding</keyword>
<keyword id="KW-0699">rRNA-binding</keyword>
<sequence length="206" mass="23250">MARYIGPKCKLARREGTDLFLKSARRSLDSKCKIDSAPGQHGAKKPRLSDYGLQLREKQKIRRIYGVLERQFRRYFAEADRRKGSTGELLLQLLESRLDNVVYRMGFGSTRAEARQLVSHKAIVVNGQVVNIPSFQVKAGDVVSVREKAKKQVRIQEALGLATQIGLPGWVSVDADKLEGVFKNMPDRSELTGDINEQLVVEFYSK</sequence>